<evidence type="ECO:0000250" key="1"/>
<evidence type="ECO:0000269" key="2">
    <source ref="1"/>
</evidence>
<reference key="1">
    <citation type="submission" date="2003-11" db="UniProtKB">
        <authorList>
            <person name="Nirthanan S."/>
            <person name="Sato K."/>
            <person name="Gopalakrishnakone P."/>
        </authorList>
    </citation>
    <scope>PROTEIN SEQUENCE</scope>
    <scope>FUNCTION</scope>
    <scope>SUBCELLULAR LOCATION</scope>
    <scope>TISSUE SPECIFICITY</scope>
    <scope>MASS SPECTROMETRY</scope>
    <source>
        <tissue>Venom</tissue>
    </source>
</reference>
<keyword id="KW-0903">Direct protein sequencing</keyword>
<keyword id="KW-1015">Disulfide bond</keyword>
<keyword id="KW-0964">Secreted</keyword>
<sequence>AVSCFKACMKKRGIPFVCSVDC</sequence>
<comment type="function">
    <text evidence="2">Not lethal to mice by intraperitoneal or intracerebroventricular injections in doses up to 100 micrograms.</text>
</comment>
<comment type="subcellular location">
    <subcellularLocation>
        <location evidence="2">Secreted</location>
    </subcellularLocation>
</comment>
<comment type="tissue specificity">
    <text evidence="2">Expressed by the venom gland.</text>
</comment>
<comment type="PTM">
    <text evidence="1">Contains 2 disulfide bonds.</text>
</comment>
<comment type="mass spectrometry"/>
<organism>
    <name type="scientific">Heterometrus spinifer</name>
    <name type="common">Asia giant forest scorpion</name>
    <name type="synonym">Malaysian black scorpion</name>
    <dbReference type="NCBI Taxonomy" id="118530"/>
    <lineage>
        <taxon>Eukaryota</taxon>
        <taxon>Metazoa</taxon>
        <taxon>Ecdysozoa</taxon>
        <taxon>Arthropoda</taxon>
        <taxon>Chelicerata</taxon>
        <taxon>Arachnida</taxon>
        <taxon>Scorpiones</taxon>
        <taxon>Iurida</taxon>
        <taxon>Scorpionoidea</taxon>
        <taxon>Scorpionidae</taxon>
        <taxon>Heterometrinae</taxon>
        <taxon>Heterometrus</taxon>
    </lineage>
</organism>
<protein>
    <recommendedName>
        <fullName>2.39 kDa venom peptide</fullName>
    </recommendedName>
</protein>
<dbReference type="GO" id="GO:0005576">
    <property type="term" value="C:extracellular region"/>
    <property type="evidence" value="ECO:0007669"/>
    <property type="project" value="UniProtKB-SubCell"/>
</dbReference>
<name>VP239_HETSP</name>
<accession>P83717</accession>
<proteinExistence type="evidence at protein level"/>
<feature type="peptide" id="PRO_0000394760" description="2.39 kDa venom peptide">
    <location>
        <begin position="1"/>
        <end position="22"/>
    </location>
</feature>